<name>DCD_SHEON</name>
<accession>Q8EDX5</accession>
<protein>
    <recommendedName>
        <fullName evidence="1">dCTP deaminase</fullName>
        <ecNumber evidence="1">3.5.4.13</ecNumber>
    </recommendedName>
    <alternativeName>
        <fullName evidence="1">Deoxycytidine triphosphate deaminase</fullName>
    </alternativeName>
</protein>
<gene>
    <name evidence="1" type="primary">dcd</name>
    <name type="ordered locus">SO_2616</name>
</gene>
<keyword id="KW-0378">Hydrolase</keyword>
<keyword id="KW-0546">Nucleotide metabolism</keyword>
<keyword id="KW-0547">Nucleotide-binding</keyword>
<keyword id="KW-1185">Reference proteome</keyword>
<proteinExistence type="inferred from homology"/>
<dbReference type="EC" id="3.5.4.13" evidence="1"/>
<dbReference type="EMBL" id="AE014299">
    <property type="protein sequence ID" value="AAN55645.1"/>
    <property type="molecule type" value="Genomic_DNA"/>
</dbReference>
<dbReference type="RefSeq" id="NP_718201.1">
    <property type="nucleotide sequence ID" value="NC_004347.2"/>
</dbReference>
<dbReference type="RefSeq" id="WP_011072565.1">
    <property type="nucleotide sequence ID" value="NZ_CP053946.1"/>
</dbReference>
<dbReference type="SMR" id="Q8EDX5"/>
<dbReference type="STRING" id="211586.SO_2616"/>
<dbReference type="PaxDb" id="211586-SO_2616"/>
<dbReference type="KEGG" id="son:SO_2616"/>
<dbReference type="PATRIC" id="fig|211586.12.peg.2519"/>
<dbReference type="eggNOG" id="COG0717">
    <property type="taxonomic scope" value="Bacteria"/>
</dbReference>
<dbReference type="HOGENOM" id="CLU_087476_2_0_6"/>
<dbReference type="OrthoDB" id="9780956at2"/>
<dbReference type="PhylomeDB" id="Q8EDX5"/>
<dbReference type="BioCyc" id="SONE211586:G1GMP-2402-MONOMER"/>
<dbReference type="UniPathway" id="UPA00610">
    <property type="reaction ID" value="UER00665"/>
</dbReference>
<dbReference type="Proteomes" id="UP000008186">
    <property type="component" value="Chromosome"/>
</dbReference>
<dbReference type="GO" id="GO:0008829">
    <property type="term" value="F:dCTP deaminase activity"/>
    <property type="evidence" value="ECO:0000318"/>
    <property type="project" value="GO_Central"/>
</dbReference>
<dbReference type="GO" id="GO:0000166">
    <property type="term" value="F:nucleotide binding"/>
    <property type="evidence" value="ECO:0007669"/>
    <property type="project" value="UniProtKB-KW"/>
</dbReference>
<dbReference type="GO" id="GO:0006226">
    <property type="term" value="P:dUMP biosynthetic process"/>
    <property type="evidence" value="ECO:0007669"/>
    <property type="project" value="UniProtKB-UniPathway"/>
</dbReference>
<dbReference type="GO" id="GO:0006229">
    <property type="term" value="P:dUTP biosynthetic process"/>
    <property type="evidence" value="ECO:0007669"/>
    <property type="project" value="UniProtKB-UniRule"/>
</dbReference>
<dbReference type="GO" id="GO:0015949">
    <property type="term" value="P:nucleobase-containing small molecule interconversion"/>
    <property type="evidence" value="ECO:0000318"/>
    <property type="project" value="GO_Central"/>
</dbReference>
<dbReference type="CDD" id="cd07557">
    <property type="entry name" value="trimeric_dUTPase"/>
    <property type="match status" value="1"/>
</dbReference>
<dbReference type="FunFam" id="2.70.40.10:FF:000003">
    <property type="entry name" value="dCTP deaminase"/>
    <property type="match status" value="1"/>
</dbReference>
<dbReference type="Gene3D" id="2.70.40.10">
    <property type="match status" value="1"/>
</dbReference>
<dbReference type="HAMAP" id="MF_00146">
    <property type="entry name" value="dCTP_deaminase"/>
    <property type="match status" value="1"/>
</dbReference>
<dbReference type="InterPro" id="IPR011962">
    <property type="entry name" value="dCTP_deaminase"/>
</dbReference>
<dbReference type="InterPro" id="IPR036157">
    <property type="entry name" value="dUTPase-like_sf"/>
</dbReference>
<dbReference type="InterPro" id="IPR033704">
    <property type="entry name" value="dUTPase_trimeric"/>
</dbReference>
<dbReference type="NCBIfam" id="TIGR02274">
    <property type="entry name" value="dCTP_deam"/>
    <property type="match status" value="1"/>
</dbReference>
<dbReference type="PANTHER" id="PTHR42680">
    <property type="entry name" value="DCTP DEAMINASE"/>
    <property type="match status" value="1"/>
</dbReference>
<dbReference type="PANTHER" id="PTHR42680:SF3">
    <property type="entry name" value="DCTP DEAMINASE"/>
    <property type="match status" value="1"/>
</dbReference>
<dbReference type="Pfam" id="PF22769">
    <property type="entry name" value="DCD"/>
    <property type="match status" value="1"/>
</dbReference>
<dbReference type="SUPFAM" id="SSF51283">
    <property type="entry name" value="dUTPase-like"/>
    <property type="match status" value="1"/>
</dbReference>
<evidence type="ECO:0000255" key="1">
    <source>
        <dbReference type="HAMAP-Rule" id="MF_00146"/>
    </source>
</evidence>
<evidence type="ECO:0000256" key="2">
    <source>
        <dbReference type="SAM" id="MobiDB-lite"/>
    </source>
</evidence>
<feature type="chain" id="PRO_0000156012" description="dCTP deaminase">
    <location>
        <begin position="1"/>
        <end position="193"/>
    </location>
</feature>
<feature type="region of interest" description="Disordered" evidence="2">
    <location>
        <begin position="171"/>
        <end position="193"/>
    </location>
</feature>
<feature type="active site" description="Proton donor/acceptor" evidence="1">
    <location>
        <position position="138"/>
    </location>
</feature>
<feature type="binding site" evidence="1">
    <location>
        <begin position="110"/>
        <end position="115"/>
    </location>
    <ligand>
        <name>dCTP</name>
        <dbReference type="ChEBI" id="CHEBI:61481"/>
    </ligand>
</feature>
<feature type="binding site" evidence="1">
    <location>
        <position position="128"/>
    </location>
    <ligand>
        <name>dCTP</name>
        <dbReference type="ChEBI" id="CHEBI:61481"/>
    </ligand>
</feature>
<feature type="binding site" evidence="1">
    <location>
        <begin position="136"/>
        <end position="138"/>
    </location>
    <ligand>
        <name>dCTP</name>
        <dbReference type="ChEBI" id="CHEBI:61481"/>
    </ligand>
</feature>
<feature type="binding site" evidence="1">
    <location>
        <position position="171"/>
    </location>
    <ligand>
        <name>dCTP</name>
        <dbReference type="ChEBI" id="CHEBI:61481"/>
    </ligand>
</feature>
<feature type="binding site" evidence="1">
    <location>
        <position position="178"/>
    </location>
    <ligand>
        <name>dCTP</name>
        <dbReference type="ChEBI" id="CHEBI:61481"/>
    </ligand>
</feature>
<feature type="binding site" evidence="1">
    <location>
        <position position="182"/>
    </location>
    <ligand>
        <name>dCTP</name>
        <dbReference type="ChEBI" id="CHEBI:61481"/>
    </ligand>
</feature>
<comment type="function">
    <text evidence="1">Catalyzes the deamination of dCTP to dUTP.</text>
</comment>
<comment type="catalytic activity">
    <reaction evidence="1">
        <text>dCTP + H2O + H(+) = dUTP + NH4(+)</text>
        <dbReference type="Rhea" id="RHEA:22680"/>
        <dbReference type="ChEBI" id="CHEBI:15377"/>
        <dbReference type="ChEBI" id="CHEBI:15378"/>
        <dbReference type="ChEBI" id="CHEBI:28938"/>
        <dbReference type="ChEBI" id="CHEBI:61481"/>
        <dbReference type="ChEBI" id="CHEBI:61555"/>
        <dbReference type="EC" id="3.5.4.13"/>
    </reaction>
</comment>
<comment type="pathway">
    <text evidence="1">Pyrimidine metabolism; dUMP biosynthesis; dUMP from dCTP (dUTP route): step 1/2.</text>
</comment>
<comment type="subunit">
    <text evidence="1">Homotrimer.</text>
</comment>
<comment type="similarity">
    <text evidence="1">Belongs to the dCTP deaminase family.</text>
</comment>
<organism>
    <name type="scientific">Shewanella oneidensis (strain ATCC 700550 / JCM 31522 / CIP 106686 / LMG 19005 / NCIMB 14063 / MR-1)</name>
    <dbReference type="NCBI Taxonomy" id="211586"/>
    <lineage>
        <taxon>Bacteria</taxon>
        <taxon>Pseudomonadati</taxon>
        <taxon>Pseudomonadota</taxon>
        <taxon>Gammaproteobacteria</taxon>
        <taxon>Alteromonadales</taxon>
        <taxon>Shewanellaceae</taxon>
        <taxon>Shewanella</taxon>
    </lineage>
</organism>
<sequence length="193" mass="21218">MRLTDIEIEQALDNGTIVIEPRPNNDAISGVSVDVRLGGQFRVFKDHTAPFIDLSGPSGEVQAALDRVMSEIIEIPDGEAFFLHPGELALAVTYESVTLPADIVGWLDGRSSLARLGLMVHVTAHRIDPGWQGKIVLEFYNSGKLPLALRPRMTIGALNFERLSGPVARPYNKRKNAKYKDQQDAVASRISQD</sequence>
<reference key="1">
    <citation type="journal article" date="2002" name="Nat. Biotechnol.">
        <title>Genome sequence of the dissimilatory metal ion-reducing bacterium Shewanella oneidensis.</title>
        <authorList>
            <person name="Heidelberg J.F."/>
            <person name="Paulsen I.T."/>
            <person name="Nelson K.E."/>
            <person name="Gaidos E.J."/>
            <person name="Nelson W.C."/>
            <person name="Read T.D."/>
            <person name="Eisen J.A."/>
            <person name="Seshadri R."/>
            <person name="Ward N.L."/>
            <person name="Methe B.A."/>
            <person name="Clayton R.A."/>
            <person name="Meyer T."/>
            <person name="Tsapin A."/>
            <person name="Scott J."/>
            <person name="Beanan M.J."/>
            <person name="Brinkac L.M."/>
            <person name="Daugherty S.C."/>
            <person name="DeBoy R.T."/>
            <person name="Dodson R.J."/>
            <person name="Durkin A.S."/>
            <person name="Haft D.H."/>
            <person name="Kolonay J.F."/>
            <person name="Madupu R."/>
            <person name="Peterson J.D."/>
            <person name="Umayam L.A."/>
            <person name="White O."/>
            <person name="Wolf A.M."/>
            <person name="Vamathevan J.J."/>
            <person name="Weidman J.F."/>
            <person name="Impraim M."/>
            <person name="Lee K."/>
            <person name="Berry K.J."/>
            <person name="Lee C."/>
            <person name="Mueller J."/>
            <person name="Khouri H.M."/>
            <person name="Gill J."/>
            <person name="Utterback T.R."/>
            <person name="McDonald L.A."/>
            <person name="Feldblyum T.V."/>
            <person name="Smith H.O."/>
            <person name="Venter J.C."/>
            <person name="Nealson K.H."/>
            <person name="Fraser C.M."/>
        </authorList>
    </citation>
    <scope>NUCLEOTIDE SEQUENCE [LARGE SCALE GENOMIC DNA]</scope>
    <source>
        <strain>ATCC 700550 / JCM 31522 / CIP 106686 / LMG 19005 / NCIMB 14063 / MR-1</strain>
    </source>
</reference>